<organism>
    <name type="scientific">Bacillus subtilis (strain 168)</name>
    <dbReference type="NCBI Taxonomy" id="224308"/>
    <lineage>
        <taxon>Bacteria</taxon>
        <taxon>Bacillati</taxon>
        <taxon>Bacillota</taxon>
        <taxon>Bacilli</taxon>
        <taxon>Bacillales</taxon>
        <taxon>Bacillaceae</taxon>
        <taxon>Bacillus</taxon>
    </lineage>
</organism>
<keyword id="KW-1185">Reference proteome</keyword>
<gene>
    <name type="primary">ygxA</name>
    <name type="ordered locus">BSU08750</name>
</gene>
<dbReference type="EMBL" id="Z82044">
    <property type="protein sequence ID" value="CAB04802.1"/>
    <property type="molecule type" value="Genomic_DNA"/>
</dbReference>
<dbReference type="EMBL" id="AL009126">
    <property type="protein sequence ID" value="CAB12703.1"/>
    <property type="molecule type" value="Genomic_DNA"/>
</dbReference>
<dbReference type="EMBL" id="X55332">
    <property type="protein sequence ID" value="CAA39031.1"/>
    <property type="molecule type" value="Genomic_DNA"/>
</dbReference>
<dbReference type="PIR" id="E69817">
    <property type="entry name" value="E69817"/>
</dbReference>
<dbReference type="RefSeq" id="NP_388755.1">
    <property type="nucleotide sequence ID" value="NC_000964.3"/>
</dbReference>
<dbReference type="RefSeq" id="WP_003243727.1">
    <property type="nucleotide sequence ID" value="NZ_OZ025638.1"/>
</dbReference>
<dbReference type="SMR" id="Q04385"/>
<dbReference type="FunCoup" id="Q04385">
    <property type="interactions" value="25"/>
</dbReference>
<dbReference type="STRING" id="224308.BSU08750"/>
<dbReference type="PaxDb" id="224308-BSU08750"/>
<dbReference type="EnsemblBacteria" id="CAB12703">
    <property type="protein sequence ID" value="CAB12703"/>
    <property type="gene ID" value="BSU_08750"/>
</dbReference>
<dbReference type="GeneID" id="936198"/>
<dbReference type="KEGG" id="bsu:BSU08750"/>
<dbReference type="PATRIC" id="fig|224308.179.peg.943"/>
<dbReference type="eggNOG" id="ENOG502Z8VM">
    <property type="taxonomic scope" value="Bacteria"/>
</dbReference>
<dbReference type="InParanoid" id="Q04385"/>
<dbReference type="OrthoDB" id="2350973at2"/>
<dbReference type="BioCyc" id="BSUB:BSU08750-MONOMER"/>
<dbReference type="Proteomes" id="UP000001570">
    <property type="component" value="Chromosome"/>
</dbReference>
<dbReference type="Gene3D" id="3.30.460.10">
    <property type="entry name" value="Beta Polymerase, domain 2"/>
    <property type="match status" value="1"/>
</dbReference>
<dbReference type="Gene3D" id="1.20.120.330">
    <property type="entry name" value="Nucleotidyltransferases domain 2"/>
    <property type="match status" value="1"/>
</dbReference>
<dbReference type="Gene3D" id="1.10.10.10">
    <property type="entry name" value="Winged helix-like DNA-binding domain superfamily/Winged helix DNA-binding domain"/>
    <property type="match status" value="1"/>
</dbReference>
<dbReference type="InterPro" id="IPR043519">
    <property type="entry name" value="NT_sf"/>
</dbReference>
<dbReference type="InterPro" id="IPR029348">
    <property type="entry name" value="NTF-like"/>
</dbReference>
<dbReference type="InterPro" id="IPR036388">
    <property type="entry name" value="WH-like_DNA-bd_sf"/>
</dbReference>
<dbReference type="InterPro" id="IPR054515">
    <property type="entry name" value="YgxA-like_substrate-bd"/>
</dbReference>
<dbReference type="InterPro" id="IPR041143">
    <property type="entry name" value="YgxA_HTH"/>
</dbReference>
<dbReference type="Pfam" id="PF18576">
    <property type="entry name" value="HTH_52"/>
    <property type="match status" value="1"/>
</dbReference>
<dbReference type="Pfam" id="PF14540">
    <property type="entry name" value="NTF-like"/>
    <property type="match status" value="1"/>
</dbReference>
<dbReference type="Pfam" id="PF22339">
    <property type="entry name" value="YgxA-like_sub_bind"/>
    <property type="match status" value="1"/>
</dbReference>
<name>YGXA_BACSU</name>
<proteinExistence type="predicted"/>
<feature type="chain" id="PRO_0000049545" description="Uncharacterized protein YgxA">
    <location>
        <begin position="1"/>
        <end position="294"/>
    </location>
</feature>
<accession>Q04385</accession>
<reference key="1">
    <citation type="journal article" date="1997" name="Microbiology">
        <title>The Bacillus subtilis 168 chromosome from sspE to katA.</title>
        <authorList>
            <person name="Cummings N.J."/>
            <person name="Connerton I.F."/>
        </authorList>
    </citation>
    <scope>NUCLEOTIDE SEQUENCE [GENOMIC DNA]</scope>
    <source>
        <strain>168</strain>
    </source>
</reference>
<reference key="2">
    <citation type="journal article" date="1997" name="Nature">
        <title>The complete genome sequence of the Gram-positive bacterium Bacillus subtilis.</title>
        <authorList>
            <person name="Kunst F."/>
            <person name="Ogasawara N."/>
            <person name="Moszer I."/>
            <person name="Albertini A.M."/>
            <person name="Alloni G."/>
            <person name="Azevedo V."/>
            <person name="Bertero M.G."/>
            <person name="Bessieres P."/>
            <person name="Bolotin A."/>
            <person name="Borchert S."/>
            <person name="Borriss R."/>
            <person name="Boursier L."/>
            <person name="Brans A."/>
            <person name="Braun M."/>
            <person name="Brignell S.C."/>
            <person name="Bron S."/>
            <person name="Brouillet S."/>
            <person name="Bruschi C.V."/>
            <person name="Caldwell B."/>
            <person name="Capuano V."/>
            <person name="Carter N.M."/>
            <person name="Choi S.-K."/>
            <person name="Codani J.-J."/>
            <person name="Connerton I.F."/>
            <person name="Cummings N.J."/>
            <person name="Daniel R.A."/>
            <person name="Denizot F."/>
            <person name="Devine K.M."/>
            <person name="Duesterhoeft A."/>
            <person name="Ehrlich S.D."/>
            <person name="Emmerson P.T."/>
            <person name="Entian K.-D."/>
            <person name="Errington J."/>
            <person name="Fabret C."/>
            <person name="Ferrari E."/>
            <person name="Foulger D."/>
            <person name="Fritz C."/>
            <person name="Fujita M."/>
            <person name="Fujita Y."/>
            <person name="Fuma S."/>
            <person name="Galizzi A."/>
            <person name="Galleron N."/>
            <person name="Ghim S.-Y."/>
            <person name="Glaser P."/>
            <person name="Goffeau A."/>
            <person name="Golightly E.J."/>
            <person name="Grandi G."/>
            <person name="Guiseppi G."/>
            <person name="Guy B.J."/>
            <person name="Haga K."/>
            <person name="Haiech J."/>
            <person name="Harwood C.R."/>
            <person name="Henaut A."/>
            <person name="Hilbert H."/>
            <person name="Holsappel S."/>
            <person name="Hosono S."/>
            <person name="Hullo M.-F."/>
            <person name="Itaya M."/>
            <person name="Jones L.-M."/>
            <person name="Joris B."/>
            <person name="Karamata D."/>
            <person name="Kasahara Y."/>
            <person name="Klaerr-Blanchard M."/>
            <person name="Klein C."/>
            <person name="Kobayashi Y."/>
            <person name="Koetter P."/>
            <person name="Koningstein G."/>
            <person name="Krogh S."/>
            <person name="Kumano M."/>
            <person name="Kurita K."/>
            <person name="Lapidus A."/>
            <person name="Lardinois S."/>
            <person name="Lauber J."/>
            <person name="Lazarevic V."/>
            <person name="Lee S.-M."/>
            <person name="Levine A."/>
            <person name="Liu H."/>
            <person name="Masuda S."/>
            <person name="Mauel C."/>
            <person name="Medigue C."/>
            <person name="Medina N."/>
            <person name="Mellado R.P."/>
            <person name="Mizuno M."/>
            <person name="Moestl D."/>
            <person name="Nakai S."/>
            <person name="Noback M."/>
            <person name="Noone D."/>
            <person name="O'Reilly M."/>
            <person name="Ogawa K."/>
            <person name="Ogiwara A."/>
            <person name="Oudega B."/>
            <person name="Park S.-H."/>
            <person name="Parro V."/>
            <person name="Pohl T.M."/>
            <person name="Portetelle D."/>
            <person name="Porwollik S."/>
            <person name="Prescott A.M."/>
            <person name="Presecan E."/>
            <person name="Pujic P."/>
            <person name="Purnelle B."/>
            <person name="Rapoport G."/>
            <person name="Rey M."/>
            <person name="Reynolds S."/>
            <person name="Rieger M."/>
            <person name="Rivolta C."/>
            <person name="Rocha E."/>
            <person name="Roche B."/>
            <person name="Rose M."/>
            <person name="Sadaie Y."/>
            <person name="Sato T."/>
            <person name="Scanlan E."/>
            <person name="Schleich S."/>
            <person name="Schroeter R."/>
            <person name="Scoffone F."/>
            <person name="Sekiguchi J."/>
            <person name="Sekowska A."/>
            <person name="Seror S.J."/>
            <person name="Serror P."/>
            <person name="Shin B.-S."/>
            <person name="Soldo B."/>
            <person name="Sorokin A."/>
            <person name="Tacconi E."/>
            <person name="Takagi T."/>
            <person name="Takahashi H."/>
            <person name="Takemaru K."/>
            <person name="Takeuchi M."/>
            <person name="Tamakoshi A."/>
            <person name="Tanaka T."/>
            <person name="Terpstra P."/>
            <person name="Tognoni A."/>
            <person name="Tosato V."/>
            <person name="Uchiyama S."/>
            <person name="Vandenbol M."/>
            <person name="Vannier F."/>
            <person name="Vassarotti A."/>
            <person name="Viari A."/>
            <person name="Wambutt R."/>
            <person name="Wedler E."/>
            <person name="Wedler H."/>
            <person name="Weitzenegger T."/>
            <person name="Winters P."/>
            <person name="Wipat A."/>
            <person name="Yamamoto H."/>
            <person name="Yamane K."/>
            <person name="Yasumoto K."/>
            <person name="Yata K."/>
            <person name="Yoshida K."/>
            <person name="Yoshikawa H.-F."/>
            <person name="Zumstein E."/>
            <person name="Yoshikawa H."/>
            <person name="Danchin A."/>
        </authorList>
    </citation>
    <scope>NUCLEOTIDE SEQUENCE [LARGE SCALE GENOMIC DNA]</scope>
    <source>
        <strain>168</strain>
    </source>
</reference>
<reference key="3">
    <citation type="journal article" date="1990" name="Genetics">
        <title>Genetic structure and DNA sequences at junctions involved in the rearrangements of Bacillus subtilis strains carrying the trpE26 mutation.</title>
        <authorList>
            <person name="Jarvis E.D."/>
            <person name="Cheng S."/>
            <person name="Rudner R."/>
        </authorList>
    </citation>
    <scope>NUCLEOTIDE SEQUENCE [GENOMIC DNA] OF 138-294</scope>
    <source>
        <strain>168</strain>
    </source>
</reference>
<sequence length="294" mass="34396">MENLLRPIYQERASHPNTLAVIMIERRNKTSSLTDNFDAALLVIVKDADEPVFIKHYEFDHQTASLHVVTDSQIQEWILLGTNRRIIDWIVNGRVLFDRNEYVVELIDRLNTFPFAERKLKIGLEYGKLIRRYVEGKAFFEANQFLDAYNAVVHALHHLARIEVIDRGFHPETTVWSQVRQMEPQVYKLYSELIESHESLEKRLELLFLANDFLIHSKAEIGSAHLFEVMKEKDIWQFGELLQHHDLKHFTQDLGVMLDYLTEKGLINVCQIETKGQAVYHRGYSFKKGVDSDS</sequence>
<protein>
    <recommendedName>
        <fullName>Uncharacterized protein YgxA</fullName>
    </recommendedName>
</protein>